<organismHost>
    <name type="scientific">Homo sapiens</name>
    <name type="common">Human</name>
    <dbReference type="NCBI Taxonomy" id="9606"/>
</organismHost>
<protein>
    <recommendedName>
        <fullName evidence="1">Intermediate capsid protein VP6</fullName>
    </recommendedName>
</protein>
<organism>
    <name type="scientific">Rotavirus C (isolate RVC/Human/Brazil/Belem/1992)</name>
    <name type="common">RV-C</name>
    <dbReference type="NCBI Taxonomy" id="31566"/>
    <lineage>
        <taxon>Viruses</taxon>
        <taxon>Riboviria</taxon>
        <taxon>Orthornavirae</taxon>
        <taxon>Duplornaviricota</taxon>
        <taxon>Resentoviricetes</taxon>
        <taxon>Reovirales</taxon>
        <taxon>Sedoreoviridae</taxon>
        <taxon>Rotavirus</taxon>
        <taxon>Rotavirus C</taxon>
    </lineage>
</organism>
<sequence length="395" mass="44720">MDVLFSIAKTVSDLKKKVVVGTIYTNVEDVVQQTNELIRTLNGNIFHTGGIGTQPQKEWNFQLPQLGTTLLNLDDNYVQSTRGIIDFLSSFIEAVCDDEIVREASRNGMQPQSPALILLSSSKFKTINFNNSSQSIKNWNAQSRRENPVYEYKNPMLFEYKNSYILQRANPQFGSVMGLRYYTTSNTCQIAAFDSTLAENAPNNTQRFVYNGRLKRPISNVLMKIEAGAPNISNPTILPDPNNQTTWLFNPVQLMNGTFTIEFYNNGQLIDMVRNMGIVTVRTFDSYRITIDMIRPAAMTQYVQRIFPQGGPYHFQATYMLTLSILDATTESVLCDSHSVEYSIVANVRRDSAMPAGTVFQPGFPWEHTLSNYTVAQEDNLERLLLIASVKRMVM</sequence>
<reference key="1">
    <citation type="journal article" date="1992" name="Virology">
        <title>The correct sequence of the porcine group C/Cowden rotavirus major inner capsid protein shows close homology with human isolates from Brazil and the U.K.</title>
        <authorList>
            <person name="Cooke S.J."/>
            <person name="Clarke I.N."/>
            <person name="Freitas R.B."/>
            <person name="Gabbay Y.B."/>
            <person name="Lambden P.R."/>
        </authorList>
    </citation>
    <scope>NUCLEOTIDE SEQUENCE [GENOMIC RNA]</scope>
</reference>
<feature type="chain" id="PRO_0000149570" description="Intermediate capsid protein VP6">
    <location>
        <begin position="1"/>
        <end position="395"/>
    </location>
</feature>
<proteinExistence type="inferred from homology"/>
<comment type="function">
    <text evidence="1">Intermediate capsid protein that self assembles to form an icosahedral capsid with a T=13 symmetry, which consists of 230 trimers of VP6, with channels at each of its five-fold vertices. This capsid constitutes the middle concentric layer of the viral mature particle. The innermost VP2 capsid and the intermediate VP6 capsid remain intact following cell entry to protect the dsRNA from degradation and to prevent unfavorable antiviral responses in the host cell during all the replication cycle of the virus. Nascent transcripts are transcribed within the structural confines of this double-layered particle (DLP) and are extruded through the channels at the five-fold axes. VP6 is required for the transcription activity of the DLP.</text>
</comment>
<comment type="subunit">
    <text evidence="1">Homotrimer. Interacts with the inner capsid protein VP2. Interacts with the outer capsid glycoprotein VP7.</text>
</comment>
<comment type="subcellular location">
    <subcellularLocation>
        <location evidence="1">Virion</location>
    </subcellularLocation>
    <text evidence="1">Component of the intermediate capsid. Also found in spherical cytoplasmic structures, called virus factories, that appear early after infection and are the site of viral replication and packaging.</text>
</comment>
<comment type="similarity">
    <text evidence="1">Belongs to the rotavirus VP6 family.</text>
</comment>
<keyword id="KW-0167">Capsid protein</keyword>
<keyword id="KW-1154">Intermediate capsid protein</keyword>
<keyword id="KW-0946">Virion</keyword>
<evidence type="ECO:0000255" key="1">
    <source>
        <dbReference type="HAMAP-Rule" id="MF_04126"/>
    </source>
</evidence>
<accession>P69482</accession>
<accession>P30213</accession>
<name>VP6_ROTHF</name>
<dbReference type="EMBL" id="M94155">
    <property type="protein sequence ID" value="AAA47339.1"/>
    <property type="molecule type" value="Genomic_RNA"/>
</dbReference>
<dbReference type="PIR" id="A41041">
    <property type="entry name" value="VPXRCR"/>
</dbReference>
<dbReference type="SMR" id="P69482"/>
<dbReference type="GO" id="GO:0019031">
    <property type="term" value="C:viral envelope"/>
    <property type="evidence" value="ECO:0007669"/>
    <property type="project" value="UniProtKB-UniRule"/>
</dbReference>
<dbReference type="GO" id="GO:0039626">
    <property type="term" value="C:viral intermediate capsid"/>
    <property type="evidence" value="ECO:0007669"/>
    <property type="project" value="UniProtKB-UniRule"/>
</dbReference>
<dbReference type="GO" id="GO:0046789">
    <property type="term" value="F:host cell surface receptor binding"/>
    <property type="evidence" value="ECO:0007669"/>
    <property type="project" value="UniProtKB-UniRule"/>
</dbReference>
<dbReference type="GO" id="GO:0005198">
    <property type="term" value="F:structural molecule activity"/>
    <property type="evidence" value="ECO:0007669"/>
    <property type="project" value="UniProtKB-UniRule"/>
</dbReference>
<dbReference type="GO" id="GO:0019064">
    <property type="term" value="P:fusion of virus membrane with host plasma membrane"/>
    <property type="evidence" value="ECO:0007669"/>
    <property type="project" value="UniProtKB-UniRule"/>
</dbReference>
<dbReference type="Gene3D" id="2.60.120.170">
    <property type="match status" value="1"/>
</dbReference>
<dbReference type="Gene3D" id="1.10.1350.10">
    <property type="entry name" value="Viral capsid alpha domain"/>
    <property type="match status" value="1"/>
</dbReference>
<dbReference type="HAMAP" id="MF_04126">
    <property type="entry name" value="Rota_VP6"/>
    <property type="match status" value="1"/>
</dbReference>
<dbReference type="InterPro" id="IPR008980">
    <property type="entry name" value="Capsid_hemagglutn"/>
</dbReference>
<dbReference type="InterPro" id="IPR001385">
    <property type="entry name" value="Rotavirus_A/C_VP6"/>
</dbReference>
<dbReference type="InterPro" id="IPR008935">
    <property type="entry name" value="Virus_capsid_a-hlx_vir"/>
</dbReference>
<dbReference type="Pfam" id="PF00980">
    <property type="entry name" value="Rota_Capsid_VP6"/>
    <property type="match status" value="1"/>
</dbReference>
<dbReference type="SUPFAM" id="SSF48345">
    <property type="entry name" value="A virus capsid protein alpha-helical domain"/>
    <property type="match status" value="1"/>
</dbReference>
<dbReference type="SUPFAM" id="SSF49818">
    <property type="entry name" value="Viral protein domain"/>
    <property type="match status" value="1"/>
</dbReference>